<dbReference type="EMBL" id="AE000516">
    <property type="protein sequence ID" value="AAK46938.1"/>
    <property type="molecule type" value="Genomic_DNA"/>
</dbReference>
<dbReference type="PIR" id="B70660">
    <property type="entry name" value="B70660"/>
</dbReference>
<dbReference type="RefSeq" id="WP_003413183.1">
    <property type="nucleotide sequence ID" value="NZ_KK341227.1"/>
</dbReference>
<dbReference type="SMR" id="P9WJ44"/>
<dbReference type="KEGG" id="mtc:MT2627"/>
<dbReference type="PATRIC" id="fig|83331.31.peg.2833"/>
<dbReference type="HOGENOM" id="CLU_2700760_0_0_11"/>
<dbReference type="Proteomes" id="UP000001020">
    <property type="component" value="Chromosome"/>
</dbReference>
<dbReference type="GO" id="GO:0003677">
    <property type="term" value="F:DNA binding"/>
    <property type="evidence" value="ECO:0007669"/>
    <property type="project" value="UniProtKB-KW"/>
</dbReference>
<dbReference type="GO" id="GO:0006355">
    <property type="term" value="P:regulation of DNA-templated transcription"/>
    <property type="evidence" value="ECO:0007669"/>
    <property type="project" value="InterPro"/>
</dbReference>
<dbReference type="CDD" id="cd21631">
    <property type="entry name" value="RHH_CopG_NikR-like"/>
    <property type="match status" value="1"/>
</dbReference>
<dbReference type="InterPro" id="IPR002145">
    <property type="entry name" value="CopG"/>
</dbReference>
<dbReference type="Pfam" id="PF01402">
    <property type="entry name" value="RHH_1"/>
    <property type="match status" value="1"/>
</dbReference>
<keyword id="KW-0238">DNA-binding</keyword>
<keyword id="KW-1185">Reference proteome</keyword>
<keyword id="KW-1277">Toxin-antitoxin system</keyword>
<proteinExistence type="inferred from homology"/>
<feature type="chain" id="PRO_0000427894" description="Antitoxin VapB20">
    <location>
        <begin position="1"/>
        <end position="81"/>
    </location>
</feature>
<gene>
    <name type="primary">vapB20</name>
    <name type="ordered locus">MT2627</name>
</gene>
<organism>
    <name type="scientific">Mycobacterium tuberculosis (strain CDC 1551 / Oshkosh)</name>
    <dbReference type="NCBI Taxonomy" id="83331"/>
    <lineage>
        <taxon>Bacteria</taxon>
        <taxon>Bacillati</taxon>
        <taxon>Actinomycetota</taxon>
        <taxon>Actinomycetes</taxon>
        <taxon>Mycobacteriales</taxon>
        <taxon>Mycobacteriaceae</taxon>
        <taxon>Mycobacterium</taxon>
        <taxon>Mycobacterium tuberculosis complex</taxon>
    </lineage>
</organism>
<accession>P9WJ44</accession>
<accession>L0TA46</accession>
<accession>P95003</accession>
<accession>Q7D6X8</accession>
<protein>
    <recommendedName>
        <fullName>Antitoxin VapB20</fullName>
    </recommendedName>
</protein>
<sequence length="81" mass="9098">MLVAYICHVKRLQIYIDEDVDRALAVEARRRRTSKAALIREYVAEHLRQPGPDPVDAFVGSFVGEADLSASVDDVVYGKHE</sequence>
<comment type="function">
    <text evidence="1">Antitoxin component of a type II toxin-antitoxin (TA) system. Neutralizes the toxic effect of cognate toxin VapC20.</text>
</comment>
<reference key="1">
    <citation type="journal article" date="2002" name="J. Bacteriol.">
        <title>Whole-genome comparison of Mycobacterium tuberculosis clinical and laboratory strains.</title>
        <authorList>
            <person name="Fleischmann R.D."/>
            <person name="Alland D."/>
            <person name="Eisen J.A."/>
            <person name="Carpenter L."/>
            <person name="White O."/>
            <person name="Peterson J.D."/>
            <person name="DeBoy R.T."/>
            <person name="Dodson R.J."/>
            <person name="Gwinn M.L."/>
            <person name="Haft D.H."/>
            <person name="Hickey E.K."/>
            <person name="Kolonay J.F."/>
            <person name="Nelson W.C."/>
            <person name="Umayam L.A."/>
            <person name="Ermolaeva M.D."/>
            <person name="Salzberg S.L."/>
            <person name="Delcher A."/>
            <person name="Utterback T.R."/>
            <person name="Weidman J.F."/>
            <person name="Khouri H.M."/>
            <person name="Gill J."/>
            <person name="Mikula A."/>
            <person name="Bishai W."/>
            <person name="Jacobs W.R. Jr."/>
            <person name="Venter J.C."/>
            <person name="Fraser C.M."/>
        </authorList>
    </citation>
    <scope>NUCLEOTIDE SEQUENCE [LARGE SCALE GENOMIC DNA]</scope>
    <source>
        <strain>CDC 1551 / Oshkosh</strain>
    </source>
</reference>
<evidence type="ECO:0000250" key="1">
    <source>
        <dbReference type="UniProtKB" id="P9WJ45"/>
    </source>
</evidence>
<name>VPB20_MYCTO</name>